<dbReference type="EC" id="6.1.1.5" evidence="1"/>
<dbReference type="EMBL" id="AE004969">
    <property type="protein sequence ID" value="AAW88832.1"/>
    <property type="molecule type" value="Genomic_DNA"/>
</dbReference>
<dbReference type="RefSeq" id="WP_003699451.1">
    <property type="nucleotide sequence ID" value="NC_002946.2"/>
</dbReference>
<dbReference type="RefSeq" id="YP_207244.1">
    <property type="nucleotide sequence ID" value="NC_002946.2"/>
</dbReference>
<dbReference type="SMR" id="Q5FAF5"/>
<dbReference type="STRING" id="242231.NGO_0069"/>
<dbReference type="KEGG" id="ngo:NGO_0069"/>
<dbReference type="PATRIC" id="fig|242231.10.peg.85"/>
<dbReference type="HOGENOM" id="CLU_001493_7_1_4"/>
<dbReference type="Proteomes" id="UP000000535">
    <property type="component" value="Chromosome"/>
</dbReference>
<dbReference type="GO" id="GO:0005829">
    <property type="term" value="C:cytosol"/>
    <property type="evidence" value="ECO:0007669"/>
    <property type="project" value="TreeGrafter"/>
</dbReference>
<dbReference type="GO" id="GO:0002161">
    <property type="term" value="F:aminoacyl-tRNA deacylase activity"/>
    <property type="evidence" value="ECO:0007669"/>
    <property type="project" value="InterPro"/>
</dbReference>
<dbReference type="GO" id="GO:0005524">
    <property type="term" value="F:ATP binding"/>
    <property type="evidence" value="ECO:0007669"/>
    <property type="project" value="UniProtKB-UniRule"/>
</dbReference>
<dbReference type="GO" id="GO:0004822">
    <property type="term" value="F:isoleucine-tRNA ligase activity"/>
    <property type="evidence" value="ECO:0007669"/>
    <property type="project" value="UniProtKB-UniRule"/>
</dbReference>
<dbReference type="GO" id="GO:0000049">
    <property type="term" value="F:tRNA binding"/>
    <property type="evidence" value="ECO:0007669"/>
    <property type="project" value="InterPro"/>
</dbReference>
<dbReference type="GO" id="GO:0008270">
    <property type="term" value="F:zinc ion binding"/>
    <property type="evidence" value="ECO:0007669"/>
    <property type="project" value="UniProtKB-UniRule"/>
</dbReference>
<dbReference type="GO" id="GO:0006428">
    <property type="term" value="P:isoleucyl-tRNA aminoacylation"/>
    <property type="evidence" value="ECO:0007669"/>
    <property type="project" value="UniProtKB-UniRule"/>
</dbReference>
<dbReference type="CDD" id="cd07960">
    <property type="entry name" value="Anticodon_Ia_Ile_BEm"/>
    <property type="match status" value="1"/>
</dbReference>
<dbReference type="FunFam" id="3.40.50.620:FF:000042">
    <property type="entry name" value="Isoleucine--tRNA ligase"/>
    <property type="match status" value="1"/>
</dbReference>
<dbReference type="FunFam" id="3.40.50.620:FF:000048">
    <property type="entry name" value="Isoleucine--tRNA ligase"/>
    <property type="match status" value="1"/>
</dbReference>
<dbReference type="FunFam" id="3.90.740.10:FF:000022">
    <property type="entry name" value="Isoleucine--tRNA ligase"/>
    <property type="match status" value="1"/>
</dbReference>
<dbReference type="Gene3D" id="1.10.730.20">
    <property type="match status" value="1"/>
</dbReference>
<dbReference type="Gene3D" id="3.40.50.620">
    <property type="entry name" value="HUPs"/>
    <property type="match status" value="2"/>
</dbReference>
<dbReference type="Gene3D" id="3.90.740.10">
    <property type="entry name" value="Valyl/Leucyl/Isoleucyl-tRNA synthetase, editing domain"/>
    <property type="match status" value="1"/>
</dbReference>
<dbReference type="HAMAP" id="MF_02002">
    <property type="entry name" value="Ile_tRNA_synth_type1"/>
    <property type="match status" value="1"/>
</dbReference>
<dbReference type="InterPro" id="IPR001412">
    <property type="entry name" value="aa-tRNA-synth_I_CS"/>
</dbReference>
<dbReference type="InterPro" id="IPR002300">
    <property type="entry name" value="aa-tRNA-synth_Ia"/>
</dbReference>
<dbReference type="InterPro" id="IPR033708">
    <property type="entry name" value="Anticodon_Ile_BEm"/>
</dbReference>
<dbReference type="InterPro" id="IPR002301">
    <property type="entry name" value="Ile-tRNA-ligase"/>
</dbReference>
<dbReference type="InterPro" id="IPR023585">
    <property type="entry name" value="Ile-tRNA-ligase_type1"/>
</dbReference>
<dbReference type="InterPro" id="IPR050081">
    <property type="entry name" value="Ile-tRNA_ligase"/>
</dbReference>
<dbReference type="InterPro" id="IPR013155">
    <property type="entry name" value="M/V/L/I-tRNA-synth_anticd-bd"/>
</dbReference>
<dbReference type="InterPro" id="IPR014729">
    <property type="entry name" value="Rossmann-like_a/b/a_fold"/>
</dbReference>
<dbReference type="InterPro" id="IPR009080">
    <property type="entry name" value="tRNAsynth_Ia_anticodon-bd"/>
</dbReference>
<dbReference type="InterPro" id="IPR009008">
    <property type="entry name" value="Val/Leu/Ile-tRNA-synth_edit"/>
</dbReference>
<dbReference type="InterPro" id="IPR010663">
    <property type="entry name" value="Znf_FPG/IleRS"/>
</dbReference>
<dbReference type="NCBIfam" id="TIGR00392">
    <property type="entry name" value="ileS"/>
    <property type="match status" value="1"/>
</dbReference>
<dbReference type="PANTHER" id="PTHR42765:SF1">
    <property type="entry name" value="ISOLEUCINE--TRNA LIGASE, MITOCHONDRIAL"/>
    <property type="match status" value="1"/>
</dbReference>
<dbReference type="PANTHER" id="PTHR42765">
    <property type="entry name" value="SOLEUCYL-TRNA SYNTHETASE"/>
    <property type="match status" value="1"/>
</dbReference>
<dbReference type="Pfam" id="PF08264">
    <property type="entry name" value="Anticodon_1"/>
    <property type="match status" value="1"/>
</dbReference>
<dbReference type="Pfam" id="PF00133">
    <property type="entry name" value="tRNA-synt_1"/>
    <property type="match status" value="1"/>
</dbReference>
<dbReference type="Pfam" id="PF06827">
    <property type="entry name" value="zf-FPG_IleRS"/>
    <property type="match status" value="1"/>
</dbReference>
<dbReference type="PRINTS" id="PR00984">
    <property type="entry name" value="TRNASYNTHILE"/>
</dbReference>
<dbReference type="SUPFAM" id="SSF47323">
    <property type="entry name" value="Anticodon-binding domain of a subclass of class I aminoacyl-tRNA synthetases"/>
    <property type="match status" value="1"/>
</dbReference>
<dbReference type="SUPFAM" id="SSF52374">
    <property type="entry name" value="Nucleotidylyl transferase"/>
    <property type="match status" value="1"/>
</dbReference>
<dbReference type="SUPFAM" id="SSF50677">
    <property type="entry name" value="ValRS/IleRS/LeuRS editing domain"/>
    <property type="match status" value="1"/>
</dbReference>
<dbReference type="PROSITE" id="PS00178">
    <property type="entry name" value="AA_TRNA_LIGASE_I"/>
    <property type="match status" value="1"/>
</dbReference>
<comment type="function">
    <text evidence="1">Catalyzes the attachment of isoleucine to tRNA(Ile). As IleRS can inadvertently accommodate and process structurally similar amino acids such as valine, to avoid such errors it has two additional distinct tRNA(Ile)-dependent editing activities. One activity is designated as 'pretransfer' editing and involves the hydrolysis of activated Val-AMP. The other activity is designated 'posttransfer' editing and involves deacylation of mischarged Val-tRNA(Ile).</text>
</comment>
<comment type="catalytic activity">
    <reaction evidence="1">
        <text>tRNA(Ile) + L-isoleucine + ATP = L-isoleucyl-tRNA(Ile) + AMP + diphosphate</text>
        <dbReference type="Rhea" id="RHEA:11060"/>
        <dbReference type="Rhea" id="RHEA-COMP:9666"/>
        <dbReference type="Rhea" id="RHEA-COMP:9695"/>
        <dbReference type="ChEBI" id="CHEBI:30616"/>
        <dbReference type="ChEBI" id="CHEBI:33019"/>
        <dbReference type="ChEBI" id="CHEBI:58045"/>
        <dbReference type="ChEBI" id="CHEBI:78442"/>
        <dbReference type="ChEBI" id="CHEBI:78528"/>
        <dbReference type="ChEBI" id="CHEBI:456215"/>
        <dbReference type="EC" id="6.1.1.5"/>
    </reaction>
</comment>
<comment type="cofactor">
    <cofactor evidence="1">
        <name>Zn(2+)</name>
        <dbReference type="ChEBI" id="CHEBI:29105"/>
    </cofactor>
    <text evidence="1">Binds 1 zinc ion per subunit.</text>
</comment>
<comment type="subunit">
    <text evidence="1">Monomer.</text>
</comment>
<comment type="subcellular location">
    <subcellularLocation>
        <location evidence="1">Cytoplasm</location>
    </subcellularLocation>
</comment>
<comment type="domain">
    <text evidence="1">IleRS has two distinct active sites: one for aminoacylation and one for editing. The misactivated valine is translocated from the active site to the editing site, which sterically excludes the correctly activated isoleucine. The single editing site contains two valyl binding pockets, one specific for each substrate (Val-AMP or Val-tRNA(Ile)).</text>
</comment>
<comment type="similarity">
    <text evidence="1">Belongs to the class-I aminoacyl-tRNA synthetase family. IleS type 1 subfamily.</text>
</comment>
<accession>Q5FAF5</accession>
<sequence length="929" mass="104224">MTDYSKTVNLLESPFPMRGNLAKREPAWLKSWYEQKRYQKLREIAKGRPKFILHDGPPYANGDIHIGHAVNKILKDIIIRSKTQAGFDAPYVPGWDCHGLPIEVMVEKLHGKDMPKARFRELCREYAAEQIARQKKDFIRLGVLGDWDNPYLTMDFKTEADTVRMLGEIYKSGYLYRGAKPVQFCLDCGSSLAEAEVEYKDKVSPAIDVAYPFKNTVALAAAFGLAGIEGKAFAVIWTTTPWTLPASQAVSAGADVVYQLIDTPKGKLVLAKDLAEGALKRYGFSDGIAILAETTGDKLENLHMNHPFLERDIPMLNGEHVTTDAGTGLVHTAPAHGLEDYAVCNKYGIELYNPVNAEGKYISETPRVAGMSVWEANPVILQWPEETGNLLASSKIEHSYAHCWRHKTPLIYRATGQWFVGMDKAGSDGKTLRDKAIKAVDDTEFFPPWGRARLESMIEGRPDWVVSRQRYWGTPMTFFVHKETGELHPNSAELLEKVAQRIEEKGIEAWFSLDKSELLSAEDCEHYDKLPDTMDVWFDSGSTHYSVVKQREELEWPADLYLEGSDQHRGWFQSSMLTGCASSMGRAPYKQLLTHGFVVDQNGRKMSKSIGNVVAPQEVYNEFGADILRLWAASTDYSGELAISKEILKRVTESYRRIRNTLSFLFANLSDFNPIEDAVQQADMVEIDRYALVLARRLQERLAGGYYPRYAFHFAVKDIVSFCSEDLGAFYLDILKDRLYTTKADSRARRSAQTALYHITRSLVLLIAPILCFTGEEAWDIIGGGEEDSVLFHTWHEFPAINEKAEAELVKKWTAIREAREAVTAAIEPLRADKTVGSSLQAEAEITAPEEMAGYLNALGEELRFALLVSKAEVKVGDELAVAAKASDGEKCERCWHYTRDVGAVAGYETVCKRCAENVGGEGETRHYA</sequence>
<protein>
    <recommendedName>
        <fullName evidence="1">Isoleucine--tRNA ligase</fullName>
        <ecNumber evidence="1">6.1.1.5</ecNumber>
    </recommendedName>
    <alternativeName>
        <fullName evidence="1">Isoleucyl-tRNA synthetase</fullName>
        <shortName evidence="1">IleRS</shortName>
    </alternativeName>
</protein>
<evidence type="ECO:0000255" key="1">
    <source>
        <dbReference type="HAMAP-Rule" id="MF_02002"/>
    </source>
</evidence>
<name>SYI_NEIG1</name>
<reference key="1">
    <citation type="submission" date="2003-03" db="EMBL/GenBank/DDBJ databases">
        <title>The complete genome sequence of Neisseria gonorrhoeae.</title>
        <authorList>
            <person name="Lewis L.A."/>
            <person name="Gillaspy A.F."/>
            <person name="McLaughlin R.E."/>
            <person name="Gipson M."/>
            <person name="Ducey T.F."/>
            <person name="Ownbey T."/>
            <person name="Hartman K."/>
            <person name="Nydick C."/>
            <person name="Carson M.B."/>
            <person name="Vaughn J."/>
            <person name="Thomson C."/>
            <person name="Song L."/>
            <person name="Lin S."/>
            <person name="Yuan X."/>
            <person name="Najar F."/>
            <person name="Zhan M."/>
            <person name="Ren Q."/>
            <person name="Zhu H."/>
            <person name="Qi S."/>
            <person name="Kenton S.M."/>
            <person name="Lai H."/>
            <person name="White J.D."/>
            <person name="Clifton S."/>
            <person name="Roe B.A."/>
            <person name="Dyer D.W."/>
        </authorList>
    </citation>
    <scope>NUCLEOTIDE SEQUENCE [LARGE SCALE GENOMIC DNA]</scope>
    <source>
        <strain>ATCC 700825 / FA 1090</strain>
    </source>
</reference>
<feature type="chain" id="PRO_0000098427" description="Isoleucine--tRNA ligase">
    <location>
        <begin position="1"/>
        <end position="929"/>
    </location>
</feature>
<feature type="short sequence motif" description="'HIGH' region">
    <location>
        <begin position="58"/>
        <end position="68"/>
    </location>
</feature>
<feature type="short sequence motif" description="'KMSKS' region">
    <location>
        <begin position="605"/>
        <end position="609"/>
    </location>
</feature>
<feature type="binding site" evidence="1">
    <location>
        <position position="563"/>
    </location>
    <ligand>
        <name>L-isoleucyl-5'-AMP</name>
        <dbReference type="ChEBI" id="CHEBI:178002"/>
    </ligand>
</feature>
<feature type="binding site" evidence="1">
    <location>
        <position position="608"/>
    </location>
    <ligand>
        <name>ATP</name>
        <dbReference type="ChEBI" id="CHEBI:30616"/>
    </ligand>
</feature>
<feature type="binding site" evidence="1">
    <location>
        <position position="892"/>
    </location>
    <ligand>
        <name>Zn(2+)</name>
        <dbReference type="ChEBI" id="CHEBI:29105"/>
    </ligand>
</feature>
<feature type="binding site" evidence="1">
    <location>
        <position position="895"/>
    </location>
    <ligand>
        <name>Zn(2+)</name>
        <dbReference type="ChEBI" id="CHEBI:29105"/>
    </ligand>
</feature>
<feature type="binding site" evidence="1">
    <location>
        <position position="912"/>
    </location>
    <ligand>
        <name>Zn(2+)</name>
        <dbReference type="ChEBI" id="CHEBI:29105"/>
    </ligand>
</feature>
<feature type="binding site" evidence="1">
    <location>
        <position position="915"/>
    </location>
    <ligand>
        <name>Zn(2+)</name>
        <dbReference type="ChEBI" id="CHEBI:29105"/>
    </ligand>
</feature>
<keyword id="KW-0030">Aminoacyl-tRNA synthetase</keyword>
<keyword id="KW-0067">ATP-binding</keyword>
<keyword id="KW-0963">Cytoplasm</keyword>
<keyword id="KW-0436">Ligase</keyword>
<keyword id="KW-0479">Metal-binding</keyword>
<keyword id="KW-0547">Nucleotide-binding</keyword>
<keyword id="KW-0648">Protein biosynthesis</keyword>
<keyword id="KW-1185">Reference proteome</keyword>
<keyword id="KW-0862">Zinc</keyword>
<gene>
    <name evidence="1" type="primary">ileS</name>
    <name type="ordered locus">NGO_0069</name>
</gene>
<proteinExistence type="inferred from homology"/>
<organism>
    <name type="scientific">Neisseria gonorrhoeae (strain ATCC 700825 / FA 1090)</name>
    <dbReference type="NCBI Taxonomy" id="242231"/>
    <lineage>
        <taxon>Bacteria</taxon>
        <taxon>Pseudomonadati</taxon>
        <taxon>Pseudomonadota</taxon>
        <taxon>Betaproteobacteria</taxon>
        <taxon>Neisseriales</taxon>
        <taxon>Neisseriaceae</taxon>
        <taxon>Neisseria</taxon>
    </lineage>
</organism>